<reference key="1">
    <citation type="journal article" date="1983" name="Cell">
        <title>Sendai virus contains overlapping genes expressed from a single mRNA.</title>
        <authorList>
            <person name="Giorgi C."/>
            <person name="Blumberg B.M."/>
            <person name="Kolakofsky D."/>
        </authorList>
    </citation>
    <scope>NUCLEOTIDE SEQUENCE [GENOMIC RNA]</scope>
</reference>
<reference key="2">
    <citation type="journal article" date="1988" name="EMBO J.">
        <title>Ribosomal initiation from an ACG codon in the Sendai virus P/C mRNA.</title>
        <authorList>
            <person name="Curran J."/>
            <person name="Kolakofsky D."/>
        </authorList>
    </citation>
    <scope>PROTEIN SEQUENCE OF N-TERMINUS</scope>
    <scope>ALTERNATIVE INITIATION</scope>
</reference>
<reference key="3">
    <citation type="journal article" date="1997" name="Virology">
        <title>A point mutation in the Sendai virus accessory C proteins attenuates virulence for mice, but not virus growth in cell culture.</title>
        <authorList>
            <person name="Garcin D."/>
            <person name="Itoh M."/>
            <person name="Kolakofsky D."/>
        </authorList>
    </citation>
    <scope>MUTAGENESIS OF PHE-181</scope>
</reference>
<reference key="4">
    <citation type="journal article" date="2004" name="J. Biol. Chem.">
        <title>Proteolytic processing and translation initiation: two independent mechanisms for the expression of the Sendai virus Y proteins.</title>
        <authorList>
            <person name="de Breyne S."/>
            <person name="Monney R.S."/>
            <person name="Curran J."/>
        </authorList>
    </citation>
    <scope>PROTEOLYTIC PROCESSING</scope>
</reference>
<reference key="5">
    <citation type="journal article" date="2004" name="J. Virol.">
        <title>A short peptide at the amino terminus of the Sendai virus C protein acts as an independent element that induces STAT1 instability.</title>
        <authorList>
            <person name="Garcin D."/>
            <person name="Marq J.B."/>
            <person name="Iseni F."/>
            <person name="Martin S."/>
            <person name="Kolakofsky D."/>
        </authorList>
    </citation>
    <scope>DOMAIN</scope>
</reference>
<dbReference type="PIR" id="B28985">
    <property type="entry name" value="MNNZHS"/>
</dbReference>
<dbReference type="SMR" id="P04861"/>
<dbReference type="GO" id="GO:0030430">
    <property type="term" value="C:host cell cytoplasm"/>
    <property type="evidence" value="ECO:0007669"/>
    <property type="project" value="UniProtKB-SubCell"/>
</dbReference>
<dbReference type="GO" id="GO:0052170">
    <property type="term" value="P:symbiont-mediated suppression of host innate immune response"/>
    <property type="evidence" value="ECO:0007669"/>
    <property type="project" value="UniProtKB-KW"/>
</dbReference>
<dbReference type="GO" id="GO:0039563">
    <property type="term" value="P:symbiont-mediated suppression of host JAK-STAT cascade via inhibition of STAT1 activity"/>
    <property type="evidence" value="ECO:0000250"/>
    <property type="project" value="UniProtKB"/>
</dbReference>
<dbReference type="GO" id="GO:0039564">
    <property type="term" value="P:symbiont-mediated suppression of host JAK-STAT cascade via inhibition of STAT2 activity"/>
    <property type="evidence" value="ECO:0007669"/>
    <property type="project" value="UniProtKB-KW"/>
</dbReference>
<dbReference type="GO" id="GO:0039502">
    <property type="term" value="P:symbiont-mediated suppression of host type I interferon-mediated signaling pathway"/>
    <property type="evidence" value="ECO:0007669"/>
    <property type="project" value="UniProtKB-KW"/>
</dbReference>
<dbReference type="InterPro" id="IPR002608">
    <property type="entry name" value="Paramyxo_C"/>
</dbReference>
<dbReference type="Pfam" id="PF01692">
    <property type="entry name" value="Paramyxo_C"/>
    <property type="match status" value="1"/>
</dbReference>
<feature type="initiator methionine" description="Removed; by host">
    <location>
        <position position="1"/>
    </location>
</feature>
<feature type="chain" id="PRO_0000039396" description="Protein C'">
    <location>
        <begin position="2"/>
        <end position="215"/>
    </location>
</feature>
<feature type="region of interest" description="Disordered" evidence="4">
    <location>
        <begin position="12"/>
        <end position="34"/>
    </location>
</feature>
<feature type="region of interest" description="Involved in self-degradation and in host STAT1 degradation" evidence="4">
    <location>
        <begin position="15"/>
        <end position="22"/>
    </location>
</feature>
<feature type="region of interest" description="Disordered" evidence="2">
    <location>
        <begin position="51"/>
        <end position="71"/>
    </location>
</feature>
<feature type="compositionally biased region" description="Polar residues" evidence="2">
    <location>
        <begin position="51"/>
        <end position="65"/>
    </location>
</feature>
<feature type="splice variant" id="VSP_018935" description="In isoform Y2." evidence="5 8">
    <location>
        <begin position="1"/>
        <end position="40"/>
    </location>
</feature>
<feature type="splice variant" id="VSP_018934" description="In isoform Y1." evidence="5 8">
    <location>
        <begin position="1"/>
        <end position="34"/>
    </location>
</feature>
<feature type="splice variant" id="VSP_018933" description="In isoform C." evidence="5 8">
    <location>
        <begin position="1"/>
        <end position="11"/>
    </location>
</feature>
<feature type="mutagenesis site" description="Complete loss of virulence and STAT1-binding." evidence="6">
    <original>F</original>
    <variation>S</variation>
    <location>
        <position position="181"/>
    </location>
</feature>
<comment type="function">
    <text evidence="1">The different products prevent the establishment of cellular antiviral state by blocking the interferon-alpha/beta (IFN-alpha/beta) and IFN-gamma signaling pathways. They inhibit IFN-alpha/beta induced tyrosine phosphorylation of STAT1 and STAT2. Blocking the IFN-alpha/beta pathway requires binding to STAT1 in the cytoplasm. They inhibit IFN-gamma induced serine phosphorylation of STAT1. Block the IFN-gamma pathway by binding to and stabilizing the parallel form of the STAT1 dimer, further inducing high-molecular-weight complex formation and inhibition of transcription by IFN-gamma. May also have a role in preventing the cell to enter apoptosis. Modulate regulation of viral transcription and replication. Overexpression inhibits the viral RNA polymerase. The absence of all C', C, Y1 and Y2 proteins leads to viral delayed growth. Plays an important role in virion particles release. Modulates virion shape.</text>
</comment>
<comment type="subunit">
    <text evidence="1">The different isoforms interact (via C-terminus) with unphosphorylated and phosphorylated human STAT1 (via N-terminus), favoring the formation of parallel STAT1 homodimers. The different isoforms do not interact with host STAT2. C protein interacts with L protein; this interaction has an inhibitory effect on viral transcription and replication.</text>
</comment>
<comment type="subcellular location">
    <subcellularLocation>
        <location evidence="1">Host cytoplasm</location>
    </subcellularLocation>
    <text evidence="1">Protein C' seems to localize around the Golgi.</text>
</comment>
<comment type="alternative products">
    <event type="alternative initiation"/>
    <isoform>
        <id>P04861-1</id>
        <name evidence="7">C'</name>
        <sequence type="displayed"/>
    </isoform>
    <isoform>
        <id>P04861-2</id>
        <name evidence="7">C</name>
        <sequence type="described" ref="VSP_018933"/>
    </isoform>
    <isoform>
        <id>P04861-3</id>
        <name evidence="7">Y1</name>
        <sequence type="described" ref="VSP_018934"/>
    </isoform>
    <isoform>
        <id>P04861-4</id>
        <name evidence="7">Y2</name>
        <sequence type="described" ref="VSP_018935"/>
    </isoform>
</comment>
<comment type="domain">
    <text evidence="4">The disordered region at the N-terminus is involved in C protein self-degradation in trans. This self-degradation of C protein may play a role in the regulation of viral RNA synthesis. The disordered region at the N-terminus is also involved in the host STAT1 degradation in order to counteract the host innate antiviral response.</text>
</comment>
<comment type="PTM">
    <text evidence="3">Y1 and Y2 proteins are produced not only by alternative initiation, but also by proteolytic cleavage of C'. Only alternative initiation is detected in vitro, whereas in vivo cleavage seems to be predominant.</text>
</comment>
<comment type="miscellaneous">
    <text evidence="1">The C protein is found in virion at a ratio of approximately 40 molecules per virion, presumably associated with the nucleocapsid.</text>
</comment>
<comment type="miscellaneous">
    <text evidence="8">The P/V/C gene has two overlapping open reading frames. One encodes the P/V/W proteins and the other the C/Y proteins.</text>
</comment>
<comment type="miscellaneous">
    <molecule>Isoform C'</molecule>
    <text evidence="5">The initiator methionine is coded by an unusual start codon ACG.</text>
</comment>
<comment type="miscellaneous">
    <molecule>Isoform C</molecule>
    <text evidence="8">Most abundant isoform in infected cells.</text>
</comment>
<comment type="similarity">
    <text evidence="8">Belongs to the respirovirus protein C family.</text>
</comment>
<comment type="caution">
    <text evidence="8">The C' protein uses an unusual ACG start codon.</text>
</comment>
<accession>P04861</accession>
<organism>
    <name type="scientific">Sendai virus (strain Harris)</name>
    <name type="common">SeV</name>
    <dbReference type="NCBI Taxonomy" id="11196"/>
    <lineage>
        <taxon>Viruses</taxon>
        <taxon>Riboviria</taxon>
        <taxon>Orthornavirae</taxon>
        <taxon>Negarnaviricota</taxon>
        <taxon>Haploviricotina</taxon>
        <taxon>Monjiviricetes</taxon>
        <taxon>Mononegavirales</taxon>
        <taxon>Paramyxoviridae</taxon>
        <taxon>Feraresvirinae</taxon>
        <taxon>Respirovirus</taxon>
        <taxon>Respirovirus muris</taxon>
    </lineage>
</organism>
<gene>
    <name type="primary">P/V/C</name>
</gene>
<keyword id="KW-0024">Alternative initiation</keyword>
<keyword id="KW-0903">Direct protein sequencing</keyword>
<keyword id="KW-1035">Host cytoplasm</keyword>
<keyword id="KW-0945">Host-virus interaction</keyword>
<keyword id="KW-1090">Inhibition of host innate immune response by virus</keyword>
<keyword id="KW-1114">Inhibition of host interferon signaling pathway by virus</keyword>
<keyword id="KW-1105">Inhibition of host STAT1 by virus</keyword>
<keyword id="KW-1106">Inhibition of host STAT2 by virus</keyword>
<keyword id="KW-0922">Interferon antiviral system evasion</keyword>
<keyword id="KW-0899">Viral immunoevasion</keyword>
<sequence length="215" mass="25187">MASATLTAWIKMPSFLKKILKLRGRRQEEESRSRMLSDSSMLSCRVNQLTSEGTEAGSTTPSTLPKDQALPIEPKVRAKEKSQHRRPKIIDQVRRVESLGEQASQRQKHMLETLINKIYTGPLGEELVQTLYLRIWAMEETPESLKILQMREDIRDQVLKMKTERWLRTLIRGEKTKLKDFQKRYEEVHPYLMKEKVEQVIMEEAWSLAAHIVQE</sequence>
<protein>
    <recommendedName>
        <fullName>Protein C'</fullName>
    </recommendedName>
</protein>
<name>C_SENDH</name>
<proteinExistence type="evidence at protein level"/>
<evidence type="ECO:0000250" key="1">
    <source>
        <dbReference type="UniProtKB" id="P04862"/>
    </source>
</evidence>
<evidence type="ECO:0000256" key="2">
    <source>
        <dbReference type="SAM" id="MobiDB-lite"/>
    </source>
</evidence>
<evidence type="ECO:0000269" key="3">
    <source>
    </source>
</evidence>
<evidence type="ECO:0000269" key="4">
    <source>
    </source>
</evidence>
<evidence type="ECO:0000269" key="5">
    <source>
    </source>
</evidence>
<evidence type="ECO:0000269" key="6">
    <source>
    </source>
</evidence>
<evidence type="ECO:0000303" key="7">
    <source>
    </source>
</evidence>
<evidence type="ECO:0000305" key="8"/>
<organismHost>
    <name type="scientific">Cavia cutleri</name>
    <name type="common">Guinea pig</name>
    <dbReference type="NCBI Taxonomy" id="10144"/>
</organismHost>
<organismHost>
    <name type="scientific">Cricetidae sp.</name>
    <name type="common">Hamster</name>
    <dbReference type="NCBI Taxonomy" id="36483"/>
</organismHost>
<organismHost>
    <name type="scientific">Mus musculus</name>
    <name type="common">Mouse</name>
    <dbReference type="NCBI Taxonomy" id="10090"/>
</organismHost>
<organismHost>
    <name type="scientific">Rattus norvegicus</name>
    <name type="common">Rat</name>
    <dbReference type="NCBI Taxonomy" id="10116"/>
</organismHost>